<reference key="1">
    <citation type="submission" date="1997-11" db="EMBL/GenBank/DDBJ databases">
        <title>The mouse Nip2l gene: cloning, sequencing, expression analysis and genetic mapping.</title>
        <authorList>
            <person name="Barbosa M.D.F.S."/>
            <person name="Detter J.C."/>
            <person name="Kingsmore S.F."/>
        </authorList>
    </citation>
    <scope>NUCLEOTIDE SEQUENCE [MRNA]</scope>
</reference>
<reference key="2">
    <citation type="journal article" date="2002" name="Circ. Res.">
        <title>Nip21 gene expression reduces coxsackievirus B3 replication by promoting apoptotic cell death via a mitochondria-dependent pathway.</title>
        <authorList>
            <person name="Zhang H.M."/>
            <person name="Yanagawa B."/>
            <person name="Cheung P."/>
            <person name="Luo H."/>
            <person name="Yuan J."/>
            <person name="Chau D."/>
            <person name="Wang A."/>
            <person name="Bohunek L."/>
            <person name="Wilson J.E."/>
            <person name="McManus B.M."/>
            <person name="Yang D."/>
        </authorList>
    </citation>
    <scope>NUCLEOTIDE SEQUENCE [MRNA]</scope>
    <source>
        <strain>A/J</strain>
        <tissue>Heart</tissue>
    </source>
</reference>
<reference key="3">
    <citation type="submission" date="2004-04" db="EMBL/GenBank/DDBJ databases">
        <authorList>
            <person name="Zhou Y.T."/>
            <person name="Low B.C."/>
        </authorList>
    </citation>
    <scope>NUCLEOTIDE SEQUENCE [MRNA]</scope>
</reference>
<reference key="4">
    <citation type="journal article" date="2005" name="Science">
        <title>The transcriptional landscape of the mammalian genome.</title>
        <authorList>
            <person name="Carninci P."/>
            <person name="Kasukawa T."/>
            <person name="Katayama S."/>
            <person name="Gough J."/>
            <person name="Frith M.C."/>
            <person name="Maeda N."/>
            <person name="Oyama R."/>
            <person name="Ravasi T."/>
            <person name="Lenhard B."/>
            <person name="Wells C."/>
            <person name="Kodzius R."/>
            <person name="Shimokawa K."/>
            <person name="Bajic V.B."/>
            <person name="Brenner S.E."/>
            <person name="Batalov S."/>
            <person name="Forrest A.R."/>
            <person name="Zavolan M."/>
            <person name="Davis M.J."/>
            <person name="Wilming L.G."/>
            <person name="Aidinis V."/>
            <person name="Allen J.E."/>
            <person name="Ambesi-Impiombato A."/>
            <person name="Apweiler R."/>
            <person name="Aturaliya R.N."/>
            <person name="Bailey T.L."/>
            <person name="Bansal M."/>
            <person name="Baxter L."/>
            <person name="Beisel K.W."/>
            <person name="Bersano T."/>
            <person name="Bono H."/>
            <person name="Chalk A.M."/>
            <person name="Chiu K.P."/>
            <person name="Choudhary V."/>
            <person name="Christoffels A."/>
            <person name="Clutterbuck D.R."/>
            <person name="Crowe M.L."/>
            <person name="Dalla E."/>
            <person name="Dalrymple B.P."/>
            <person name="de Bono B."/>
            <person name="Della Gatta G."/>
            <person name="di Bernardo D."/>
            <person name="Down T."/>
            <person name="Engstrom P."/>
            <person name="Fagiolini M."/>
            <person name="Faulkner G."/>
            <person name="Fletcher C.F."/>
            <person name="Fukushima T."/>
            <person name="Furuno M."/>
            <person name="Futaki S."/>
            <person name="Gariboldi M."/>
            <person name="Georgii-Hemming P."/>
            <person name="Gingeras T.R."/>
            <person name="Gojobori T."/>
            <person name="Green R.E."/>
            <person name="Gustincich S."/>
            <person name="Harbers M."/>
            <person name="Hayashi Y."/>
            <person name="Hensch T.K."/>
            <person name="Hirokawa N."/>
            <person name="Hill D."/>
            <person name="Huminiecki L."/>
            <person name="Iacono M."/>
            <person name="Ikeo K."/>
            <person name="Iwama A."/>
            <person name="Ishikawa T."/>
            <person name="Jakt M."/>
            <person name="Kanapin A."/>
            <person name="Katoh M."/>
            <person name="Kawasawa Y."/>
            <person name="Kelso J."/>
            <person name="Kitamura H."/>
            <person name="Kitano H."/>
            <person name="Kollias G."/>
            <person name="Krishnan S.P."/>
            <person name="Kruger A."/>
            <person name="Kummerfeld S.K."/>
            <person name="Kurochkin I.V."/>
            <person name="Lareau L.F."/>
            <person name="Lazarevic D."/>
            <person name="Lipovich L."/>
            <person name="Liu J."/>
            <person name="Liuni S."/>
            <person name="McWilliam S."/>
            <person name="Madan Babu M."/>
            <person name="Madera M."/>
            <person name="Marchionni L."/>
            <person name="Matsuda H."/>
            <person name="Matsuzawa S."/>
            <person name="Miki H."/>
            <person name="Mignone F."/>
            <person name="Miyake S."/>
            <person name="Morris K."/>
            <person name="Mottagui-Tabar S."/>
            <person name="Mulder N."/>
            <person name="Nakano N."/>
            <person name="Nakauchi H."/>
            <person name="Ng P."/>
            <person name="Nilsson R."/>
            <person name="Nishiguchi S."/>
            <person name="Nishikawa S."/>
            <person name="Nori F."/>
            <person name="Ohara O."/>
            <person name="Okazaki Y."/>
            <person name="Orlando V."/>
            <person name="Pang K.C."/>
            <person name="Pavan W.J."/>
            <person name="Pavesi G."/>
            <person name="Pesole G."/>
            <person name="Petrovsky N."/>
            <person name="Piazza S."/>
            <person name="Reed J."/>
            <person name="Reid J.F."/>
            <person name="Ring B.Z."/>
            <person name="Ringwald M."/>
            <person name="Rost B."/>
            <person name="Ruan Y."/>
            <person name="Salzberg S.L."/>
            <person name="Sandelin A."/>
            <person name="Schneider C."/>
            <person name="Schoenbach C."/>
            <person name="Sekiguchi K."/>
            <person name="Semple C.A."/>
            <person name="Seno S."/>
            <person name="Sessa L."/>
            <person name="Sheng Y."/>
            <person name="Shibata Y."/>
            <person name="Shimada H."/>
            <person name="Shimada K."/>
            <person name="Silva D."/>
            <person name="Sinclair B."/>
            <person name="Sperling S."/>
            <person name="Stupka E."/>
            <person name="Sugiura K."/>
            <person name="Sultana R."/>
            <person name="Takenaka Y."/>
            <person name="Taki K."/>
            <person name="Tammoja K."/>
            <person name="Tan S.L."/>
            <person name="Tang S."/>
            <person name="Taylor M.S."/>
            <person name="Tegner J."/>
            <person name="Teichmann S.A."/>
            <person name="Ueda H.R."/>
            <person name="van Nimwegen E."/>
            <person name="Verardo R."/>
            <person name="Wei C.L."/>
            <person name="Yagi K."/>
            <person name="Yamanishi H."/>
            <person name="Zabarovsky E."/>
            <person name="Zhu S."/>
            <person name="Zimmer A."/>
            <person name="Hide W."/>
            <person name="Bult C."/>
            <person name="Grimmond S.M."/>
            <person name="Teasdale R.D."/>
            <person name="Liu E.T."/>
            <person name="Brusic V."/>
            <person name="Quackenbush J."/>
            <person name="Wahlestedt C."/>
            <person name="Mattick J.S."/>
            <person name="Hume D.A."/>
            <person name="Kai C."/>
            <person name="Sasaki D."/>
            <person name="Tomaru Y."/>
            <person name="Fukuda S."/>
            <person name="Kanamori-Katayama M."/>
            <person name="Suzuki M."/>
            <person name="Aoki J."/>
            <person name="Arakawa T."/>
            <person name="Iida J."/>
            <person name="Imamura K."/>
            <person name="Itoh M."/>
            <person name="Kato T."/>
            <person name="Kawaji H."/>
            <person name="Kawagashira N."/>
            <person name="Kawashima T."/>
            <person name="Kojima M."/>
            <person name="Kondo S."/>
            <person name="Konno H."/>
            <person name="Nakano K."/>
            <person name="Ninomiya N."/>
            <person name="Nishio T."/>
            <person name="Okada M."/>
            <person name="Plessy C."/>
            <person name="Shibata K."/>
            <person name="Shiraki T."/>
            <person name="Suzuki S."/>
            <person name="Tagami M."/>
            <person name="Waki K."/>
            <person name="Watahiki A."/>
            <person name="Okamura-Oho Y."/>
            <person name="Suzuki H."/>
            <person name="Kawai J."/>
            <person name="Hayashizaki Y."/>
        </authorList>
    </citation>
    <scope>NUCLEOTIDE SEQUENCE [LARGE SCALE MRNA]</scope>
</reference>
<reference key="5">
    <citation type="submission" date="2005-07" db="EMBL/GenBank/DDBJ databases">
        <authorList>
            <person name="Mural R.J."/>
            <person name="Adams M.D."/>
            <person name="Myers E.W."/>
            <person name="Smith H.O."/>
            <person name="Venter J.C."/>
        </authorList>
    </citation>
    <scope>NUCLEOTIDE SEQUENCE [LARGE SCALE GENOMIC DNA]</scope>
</reference>
<reference key="6">
    <citation type="journal article" date="2007" name="Proc. Natl. Acad. Sci. U.S.A.">
        <title>Large-scale phosphorylation analysis of mouse liver.</title>
        <authorList>
            <person name="Villen J."/>
            <person name="Beausoleil S.A."/>
            <person name="Gerber S.A."/>
            <person name="Gygi S.P."/>
        </authorList>
    </citation>
    <scope>PHOSPHORYLATION [LARGE SCALE ANALYSIS] AT SER-114</scope>
    <scope>IDENTIFICATION BY MASS SPECTROMETRY [LARGE SCALE ANALYSIS]</scope>
    <source>
        <tissue>Liver</tissue>
    </source>
</reference>
<reference key="7">
    <citation type="journal article" date="2009" name="Immunity">
        <title>The phagosomal proteome in interferon-gamma-activated macrophages.</title>
        <authorList>
            <person name="Trost M."/>
            <person name="English L."/>
            <person name="Lemieux S."/>
            <person name="Courcelles M."/>
            <person name="Desjardins M."/>
            <person name="Thibault P."/>
        </authorList>
    </citation>
    <scope>PHOSPHORYLATION [LARGE SCALE ANALYSIS] AT SER-114</scope>
    <scope>IDENTIFICATION BY MASS SPECTROMETRY [LARGE SCALE ANALYSIS]</scope>
</reference>
<reference key="8">
    <citation type="journal article" date="2010" name="Cell">
        <title>A tissue-specific atlas of mouse protein phosphorylation and expression.</title>
        <authorList>
            <person name="Huttlin E.L."/>
            <person name="Jedrychowski M.P."/>
            <person name="Elias J.E."/>
            <person name="Goswami T."/>
            <person name="Rad R."/>
            <person name="Beausoleil S.A."/>
            <person name="Villen J."/>
            <person name="Haas W."/>
            <person name="Sowa M.E."/>
            <person name="Gygi S.P."/>
        </authorList>
    </citation>
    <scope>PHOSPHORYLATION [LARGE SCALE ANALYSIS] AT SER-114</scope>
    <scope>IDENTIFICATION BY MASS SPECTROMETRY [LARGE SCALE ANALYSIS]</scope>
    <source>
        <tissue>Brain</tissue>
        <tissue>Brown adipose tissue</tissue>
        <tissue>Heart</tissue>
        <tissue>Kidney</tissue>
        <tissue>Liver</tissue>
        <tissue>Lung</tissue>
        <tissue>Spleen</tissue>
        <tissue>Testis</tissue>
    </source>
</reference>
<proteinExistence type="evidence at protein level"/>
<sequence length="326" mass="37769">MEGVELKEEWQDEDFPIPLPEDDSIEADTLDGTDPDRQPGSLEVNGNKVRKKLMAPDISLTLDPGEDSLWSDDLDEAGEVDLEGLDTPSENSDEFEWEDDLPKPKTTEVIRKGSITEYTATEEKGDGRRWRMFRIGEQDHRVDMKAIEPYKKVISHGGYYGDGLNAIVVFAVCFMPESGQPNYRYLMDNLFKYVIGTLELLVAENYMIIYLNGATTRRKMPSLGWLRRCYQQIDRRLRKNLKSLIIVHPSWFIRTLLAVTRPFISSKFSQKIRYVFNLAELAELVPMEYVGIPECIKQYEEEKFKKRQKRVDQELNGKQEPPKSEQ</sequence>
<dbReference type="EMBL" id="AF035207">
    <property type="protein sequence ID" value="AAC04329.1"/>
    <property type="molecule type" value="mRNA"/>
</dbReference>
<dbReference type="EMBL" id="AF400107">
    <property type="protein sequence ID" value="AAM76082.1"/>
    <property type="molecule type" value="mRNA"/>
</dbReference>
<dbReference type="EMBL" id="AY591758">
    <property type="protein sequence ID" value="AAT92040.1"/>
    <property type="molecule type" value="mRNA"/>
</dbReference>
<dbReference type="EMBL" id="AK054288">
    <property type="protein sequence ID" value="BAC35718.1"/>
    <property type="molecule type" value="mRNA"/>
</dbReference>
<dbReference type="EMBL" id="CH466522">
    <property type="protein sequence ID" value="EDL26178.1"/>
    <property type="molecule type" value="Genomic_DNA"/>
</dbReference>
<dbReference type="CCDS" id="CCDS23319.1"/>
<dbReference type="RefSeq" id="NP_058067.2">
    <property type="nucleotide sequence ID" value="NM_016787.4"/>
</dbReference>
<dbReference type="BioGRID" id="198376">
    <property type="interactions" value="4"/>
</dbReference>
<dbReference type="FunCoup" id="O54940">
    <property type="interactions" value="4045"/>
</dbReference>
<dbReference type="STRING" id="10090.ENSMUSP00000034754"/>
<dbReference type="iPTMnet" id="O54940"/>
<dbReference type="PhosphoSitePlus" id="O54940"/>
<dbReference type="jPOST" id="O54940"/>
<dbReference type="PaxDb" id="10090-ENSMUSP00000034754"/>
<dbReference type="ProteomicsDB" id="273790"/>
<dbReference type="Pumba" id="O54940"/>
<dbReference type="Antibodypedia" id="12947">
    <property type="antibodies" value="325 antibodies from 29 providers"/>
</dbReference>
<dbReference type="DNASU" id="12175"/>
<dbReference type="Ensembl" id="ENSMUST00000034754.12">
    <property type="protein sequence ID" value="ENSMUSP00000034754.6"/>
    <property type="gene ID" value="ENSMUSG00000011958.18"/>
</dbReference>
<dbReference type="GeneID" id="12175"/>
<dbReference type="KEGG" id="mmu:12175"/>
<dbReference type="UCSC" id="uc009qno.3">
    <property type="organism name" value="mouse"/>
</dbReference>
<dbReference type="AGR" id="MGI:109327"/>
<dbReference type="CTD" id="663"/>
<dbReference type="MGI" id="MGI:109327">
    <property type="gene designation" value="Bnip2"/>
</dbReference>
<dbReference type="VEuPathDB" id="HostDB:ENSMUSG00000011958"/>
<dbReference type="eggNOG" id="ENOG502QUXY">
    <property type="taxonomic scope" value="Eukaryota"/>
</dbReference>
<dbReference type="GeneTree" id="ENSGT00940000158531"/>
<dbReference type="InParanoid" id="O54940"/>
<dbReference type="OMA" id="SWYRTKK"/>
<dbReference type="TreeFam" id="TF324164"/>
<dbReference type="Reactome" id="R-MMU-525793">
    <property type="pathway name" value="Myogenesis"/>
</dbReference>
<dbReference type="BioGRID-ORCS" id="12175">
    <property type="hits" value="3 hits in 77 CRISPR screens"/>
</dbReference>
<dbReference type="ChiTaRS" id="Bnip2">
    <property type="organism name" value="mouse"/>
</dbReference>
<dbReference type="PRO" id="PR:O54940"/>
<dbReference type="Proteomes" id="UP000000589">
    <property type="component" value="Chromosome 9"/>
</dbReference>
<dbReference type="RNAct" id="O54940">
    <property type="molecule type" value="protein"/>
</dbReference>
<dbReference type="Bgee" id="ENSMUSG00000011958">
    <property type="expression patterns" value="Expressed in ascending aorta and 267 other cell types or tissues"/>
</dbReference>
<dbReference type="ExpressionAtlas" id="O54940">
    <property type="expression patterns" value="baseline and differential"/>
</dbReference>
<dbReference type="GO" id="GO:0005814">
    <property type="term" value="C:centriole"/>
    <property type="evidence" value="ECO:0000314"/>
    <property type="project" value="MGI"/>
</dbReference>
<dbReference type="GO" id="GO:0005737">
    <property type="term" value="C:cytoplasm"/>
    <property type="evidence" value="ECO:0000266"/>
    <property type="project" value="MGI"/>
</dbReference>
<dbReference type="GO" id="GO:0005829">
    <property type="term" value="C:cytosol"/>
    <property type="evidence" value="ECO:0000304"/>
    <property type="project" value="Reactome"/>
</dbReference>
<dbReference type="GO" id="GO:0043231">
    <property type="term" value="C:intracellular membrane-bounded organelle"/>
    <property type="evidence" value="ECO:0000250"/>
    <property type="project" value="UniProtKB"/>
</dbReference>
<dbReference type="GO" id="GO:0005635">
    <property type="term" value="C:nuclear envelope"/>
    <property type="evidence" value="ECO:0000250"/>
    <property type="project" value="UniProtKB"/>
</dbReference>
<dbReference type="GO" id="GO:0005730">
    <property type="term" value="C:nucleolus"/>
    <property type="evidence" value="ECO:0007669"/>
    <property type="project" value="Ensembl"/>
</dbReference>
<dbReference type="GO" id="GO:0048471">
    <property type="term" value="C:perinuclear region of cytoplasm"/>
    <property type="evidence" value="ECO:0007669"/>
    <property type="project" value="UniProtKB-SubCell"/>
</dbReference>
<dbReference type="GO" id="GO:0031616">
    <property type="term" value="C:spindle pole centrosome"/>
    <property type="evidence" value="ECO:0000314"/>
    <property type="project" value="MGI"/>
</dbReference>
<dbReference type="GO" id="GO:0006915">
    <property type="term" value="P:apoptotic process"/>
    <property type="evidence" value="ECO:0000266"/>
    <property type="project" value="MGI"/>
</dbReference>
<dbReference type="GO" id="GO:0001824">
    <property type="term" value="P:blastocyst development"/>
    <property type="evidence" value="ECO:0000315"/>
    <property type="project" value="MGI"/>
</dbReference>
<dbReference type="GO" id="GO:0007098">
    <property type="term" value="P:centrosome cycle"/>
    <property type="evidence" value="ECO:0000315"/>
    <property type="project" value="MGI"/>
</dbReference>
<dbReference type="GO" id="GO:0043410">
    <property type="term" value="P:positive regulation of MAPK cascade"/>
    <property type="evidence" value="ECO:0000315"/>
    <property type="project" value="MGI"/>
</dbReference>
<dbReference type="GO" id="GO:0045666">
    <property type="term" value="P:positive regulation of neuron differentiation"/>
    <property type="evidence" value="ECO:0000315"/>
    <property type="project" value="MGI"/>
</dbReference>
<dbReference type="GO" id="GO:0051057">
    <property type="term" value="P:positive regulation of small GTPase mediated signal transduction"/>
    <property type="evidence" value="ECO:0000315"/>
    <property type="project" value="MGI"/>
</dbReference>
<dbReference type="GO" id="GO:0090649">
    <property type="term" value="P:response to oxygen-glucose deprivation"/>
    <property type="evidence" value="ECO:0007669"/>
    <property type="project" value="Ensembl"/>
</dbReference>
<dbReference type="GO" id="GO:0051146">
    <property type="term" value="P:striated muscle cell differentiation"/>
    <property type="evidence" value="ECO:0000316"/>
    <property type="project" value="MGI"/>
</dbReference>
<dbReference type="CDD" id="cd00170">
    <property type="entry name" value="SEC14"/>
    <property type="match status" value="1"/>
</dbReference>
<dbReference type="FunFam" id="3.40.525.10:FF:000001">
    <property type="entry name" value="BCL2/adenovirus E1B protein-interacting protein 2"/>
    <property type="match status" value="1"/>
</dbReference>
<dbReference type="Gene3D" id="3.40.525.10">
    <property type="entry name" value="CRAL-TRIO lipid binding domain"/>
    <property type="match status" value="1"/>
</dbReference>
<dbReference type="InterPro" id="IPR022181">
    <property type="entry name" value="Bcl2-/adenovirus-E1B"/>
</dbReference>
<dbReference type="InterPro" id="IPR001251">
    <property type="entry name" value="CRAL-TRIO_dom"/>
</dbReference>
<dbReference type="InterPro" id="IPR036865">
    <property type="entry name" value="CRAL-TRIO_dom_sf"/>
</dbReference>
<dbReference type="PANTHER" id="PTHR12112:SF12">
    <property type="entry name" value="BCL2_ADENOVIRUS E1B 19 KDA PROTEIN-INTERACTING PROTEIN 2"/>
    <property type="match status" value="1"/>
</dbReference>
<dbReference type="PANTHER" id="PTHR12112">
    <property type="entry name" value="BNIP - RELATED"/>
    <property type="match status" value="1"/>
</dbReference>
<dbReference type="Pfam" id="PF12496">
    <property type="entry name" value="BNIP2"/>
    <property type="match status" value="1"/>
</dbReference>
<dbReference type="Pfam" id="PF13716">
    <property type="entry name" value="CRAL_TRIO_2"/>
    <property type="match status" value="1"/>
</dbReference>
<dbReference type="SMART" id="SM00516">
    <property type="entry name" value="SEC14"/>
    <property type="match status" value="1"/>
</dbReference>
<dbReference type="SUPFAM" id="SSF52087">
    <property type="entry name" value="CRAL/TRIO domain"/>
    <property type="match status" value="1"/>
</dbReference>
<dbReference type="PROSITE" id="PS50191">
    <property type="entry name" value="CRAL_TRIO"/>
    <property type="match status" value="1"/>
</dbReference>
<organism>
    <name type="scientific">Mus musculus</name>
    <name type="common">Mouse</name>
    <dbReference type="NCBI Taxonomy" id="10090"/>
    <lineage>
        <taxon>Eukaryota</taxon>
        <taxon>Metazoa</taxon>
        <taxon>Chordata</taxon>
        <taxon>Craniata</taxon>
        <taxon>Vertebrata</taxon>
        <taxon>Euteleostomi</taxon>
        <taxon>Mammalia</taxon>
        <taxon>Eutheria</taxon>
        <taxon>Euarchontoglires</taxon>
        <taxon>Glires</taxon>
        <taxon>Rodentia</taxon>
        <taxon>Myomorpha</taxon>
        <taxon>Muroidea</taxon>
        <taxon>Muridae</taxon>
        <taxon>Murinae</taxon>
        <taxon>Mus</taxon>
        <taxon>Mus</taxon>
    </lineage>
</organism>
<comment type="function">
    <text evidence="1">Implicated in the suppression of cell death. Interacts with the BCL-2 and adenovirus E1B 19 kDa proteins (By similarity).</text>
</comment>
<comment type="subcellular location">
    <subcellularLocation>
        <location evidence="1">Cytoplasm</location>
    </subcellularLocation>
    <subcellularLocation>
        <location evidence="1">Cytoplasm</location>
        <location evidence="1">Perinuclear region</location>
    </subcellularLocation>
    <text evidence="1">Localizes to the nuclear envelope region and to other cytoplasmic structures.</text>
</comment>
<name>BNIP2_MOUSE</name>
<feature type="chain" id="PRO_0000064962" description="BCL2/adenovirus E1B 19 kDa protein-interacting protein 2">
    <location>
        <begin position="1"/>
        <end position="326"/>
    </location>
</feature>
<feature type="domain" description="CRAL-TRIO" evidence="3">
    <location>
        <begin position="147"/>
        <end position="304"/>
    </location>
</feature>
<feature type="region of interest" description="Disordered" evidence="4">
    <location>
        <begin position="1"/>
        <end position="47"/>
    </location>
</feature>
<feature type="compositionally biased region" description="Acidic residues" evidence="4">
    <location>
        <begin position="10"/>
        <end position="33"/>
    </location>
</feature>
<feature type="modified residue" description="Phosphoserine" evidence="2">
    <location>
        <position position="41"/>
    </location>
</feature>
<feature type="modified residue" description="Phosphothreonine" evidence="2">
    <location>
        <position position="87"/>
    </location>
</feature>
<feature type="modified residue" description="Phosphoserine" evidence="2">
    <location>
        <position position="89"/>
    </location>
</feature>
<feature type="modified residue" description="Phosphoserine" evidence="2">
    <location>
        <position position="92"/>
    </location>
</feature>
<feature type="modified residue" description="Phosphoserine" evidence="6 7 8">
    <location>
        <position position="114"/>
    </location>
</feature>
<feature type="sequence conflict" description="In Ref. 1; AAC04329." evidence="5" ref="1">
    <original>D</original>
    <variation>G</variation>
    <location>
        <position position="67"/>
    </location>
</feature>
<gene>
    <name type="primary">Bnip2</name>
    <name type="synonym">Nip2l</name>
</gene>
<evidence type="ECO:0000250" key="1"/>
<evidence type="ECO:0000250" key="2">
    <source>
        <dbReference type="UniProtKB" id="Q12982"/>
    </source>
</evidence>
<evidence type="ECO:0000255" key="3">
    <source>
        <dbReference type="PROSITE-ProRule" id="PRU00056"/>
    </source>
</evidence>
<evidence type="ECO:0000256" key="4">
    <source>
        <dbReference type="SAM" id="MobiDB-lite"/>
    </source>
</evidence>
<evidence type="ECO:0000305" key="5"/>
<evidence type="ECO:0007744" key="6">
    <source>
    </source>
</evidence>
<evidence type="ECO:0007744" key="7">
    <source>
    </source>
</evidence>
<evidence type="ECO:0007744" key="8">
    <source>
    </source>
</evidence>
<protein>
    <recommendedName>
        <fullName>BCL2/adenovirus E1B 19 kDa protein-interacting protein 2</fullName>
    </recommendedName>
</protein>
<keyword id="KW-0053">Apoptosis</keyword>
<keyword id="KW-0963">Cytoplasm</keyword>
<keyword id="KW-0597">Phosphoprotein</keyword>
<keyword id="KW-1185">Reference proteome</keyword>
<accession>O54940</accession>
<accession>Q8K4H0</accession>